<evidence type="ECO:0000255" key="1">
    <source>
        <dbReference type="HAMAP-Rule" id="MF_00368"/>
    </source>
</evidence>
<evidence type="ECO:0000305" key="2"/>
<accession>A9H3S4</accession>
<accession>B5ZIF6</accession>
<keyword id="KW-1185">Reference proteome</keyword>
<keyword id="KW-0687">Ribonucleoprotein</keyword>
<keyword id="KW-0689">Ribosomal protein</keyword>
<dbReference type="EMBL" id="AM889285">
    <property type="protein sequence ID" value="CAP57354.1"/>
    <property type="molecule type" value="Genomic_DNA"/>
</dbReference>
<dbReference type="EMBL" id="CP001189">
    <property type="protein sequence ID" value="ACI52689.1"/>
    <property type="molecule type" value="Genomic_DNA"/>
</dbReference>
<dbReference type="RefSeq" id="WP_012227979.1">
    <property type="nucleotide sequence ID" value="NC_010125.1"/>
</dbReference>
<dbReference type="SMR" id="A9H3S4"/>
<dbReference type="STRING" id="272568.GDI3411"/>
<dbReference type="KEGG" id="gdi:GDI3411"/>
<dbReference type="KEGG" id="gdj:Gdia_2959"/>
<dbReference type="eggNOG" id="COG0222">
    <property type="taxonomic scope" value="Bacteria"/>
</dbReference>
<dbReference type="HOGENOM" id="CLU_086499_3_0_5"/>
<dbReference type="OrthoDB" id="9811748at2"/>
<dbReference type="Proteomes" id="UP000001176">
    <property type="component" value="Chromosome"/>
</dbReference>
<dbReference type="GO" id="GO:0022625">
    <property type="term" value="C:cytosolic large ribosomal subunit"/>
    <property type="evidence" value="ECO:0007669"/>
    <property type="project" value="TreeGrafter"/>
</dbReference>
<dbReference type="GO" id="GO:0003729">
    <property type="term" value="F:mRNA binding"/>
    <property type="evidence" value="ECO:0007669"/>
    <property type="project" value="TreeGrafter"/>
</dbReference>
<dbReference type="GO" id="GO:0003735">
    <property type="term" value="F:structural constituent of ribosome"/>
    <property type="evidence" value="ECO:0007669"/>
    <property type="project" value="InterPro"/>
</dbReference>
<dbReference type="GO" id="GO:0006412">
    <property type="term" value="P:translation"/>
    <property type="evidence" value="ECO:0007669"/>
    <property type="project" value="UniProtKB-UniRule"/>
</dbReference>
<dbReference type="CDD" id="cd00387">
    <property type="entry name" value="Ribosomal_L7_L12"/>
    <property type="match status" value="1"/>
</dbReference>
<dbReference type="FunFam" id="1.20.5.710:FF:000007">
    <property type="entry name" value="50S ribosomal protein L7/L12"/>
    <property type="match status" value="1"/>
</dbReference>
<dbReference type="FunFam" id="3.30.1390.10:FF:000001">
    <property type="entry name" value="50S ribosomal protein L7/L12"/>
    <property type="match status" value="1"/>
</dbReference>
<dbReference type="Gene3D" id="3.30.1390.10">
    <property type="match status" value="1"/>
</dbReference>
<dbReference type="Gene3D" id="1.20.5.710">
    <property type="entry name" value="Single helix bin"/>
    <property type="match status" value="1"/>
</dbReference>
<dbReference type="HAMAP" id="MF_00368">
    <property type="entry name" value="Ribosomal_bL12"/>
    <property type="match status" value="1"/>
</dbReference>
<dbReference type="InterPro" id="IPR000206">
    <property type="entry name" value="Ribosomal_bL12"/>
</dbReference>
<dbReference type="InterPro" id="IPR013823">
    <property type="entry name" value="Ribosomal_bL12_C"/>
</dbReference>
<dbReference type="InterPro" id="IPR014719">
    <property type="entry name" value="Ribosomal_bL12_C/ClpS-like"/>
</dbReference>
<dbReference type="InterPro" id="IPR008932">
    <property type="entry name" value="Ribosomal_bL12_oligo"/>
</dbReference>
<dbReference type="InterPro" id="IPR036235">
    <property type="entry name" value="Ribosomal_bL12_oligo_N_sf"/>
</dbReference>
<dbReference type="NCBIfam" id="TIGR00855">
    <property type="entry name" value="L12"/>
    <property type="match status" value="1"/>
</dbReference>
<dbReference type="PANTHER" id="PTHR45987">
    <property type="entry name" value="39S RIBOSOMAL PROTEIN L12"/>
    <property type="match status" value="1"/>
</dbReference>
<dbReference type="PANTHER" id="PTHR45987:SF4">
    <property type="entry name" value="LARGE RIBOSOMAL SUBUNIT PROTEIN BL12M"/>
    <property type="match status" value="1"/>
</dbReference>
<dbReference type="Pfam" id="PF00542">
    <property type="entry name" value="Ribosomal_L12"/>
    <property type="match status" value="1"/>
</dbReference>
<dbReference type="Pfam" id="PF16320">
    <property type="entry name" value="Ribosomal_L12_N"/>
    <property type="match status" value="1"/>
</dbReference>
<dbReference type="SUPFAM" id="SSF54736">
    <property type="entry name" value="ClpS-like"/>
    <property type="match status" value="1"/>
</dbReference>
<dbReference type="SUPFAM" id="SSF48300">
    <property type="entry name" value="Ribosomal protein L7/12, oligomerisation (N-terminal) domain"/>
    <property type="match status" value="1"/>
</dbReference>
<gene>
    <name evidence="1" type="primary">rplL</name>
    <name type="ordered locus">GDI3411</name>
    <name type="ordered locus">Gdia_2959</name>
</gene>
<proteinExistence type="inferred from homology"/>
<protein>
    <recommendedName>
        <fullName evidence="1">Large ribosomal subunit protein bL12</fullName>
    </recommendedName>
    <alternativeName>
        <fullName evidence="2">50S ribosomal protein L7/L12</fullName>
    </alternativeName>
</protein>
<feature type="chain" id="PRO_1000079797" description="Large ribosomal subunit protein bL12">
    <location>
        <begin position="1"/>
        <end position="125"/>
    </location>
</feature>
<comment type="function">
    <text evidence="1">Forms part of the ribosomal stalk which helps the ribosome interact with GTP-bound translation factors. Is thus essential for accurate translation.</text>
</comment>
<comment type="subunit">
    <text evidence="1">Homodimer. Part of the ribosomal stalk of the 50S ribosomal subunit. Forms a multimeric L10(L12)X complex, where L10 forms an elongated spine to which 2 to 4 L12 dimers bind in a sequential fashion. Binds GTP-bound translation factors.</text>
</comment>
<comment type="similarity">
    <text evidence="1">Belongs to the bacterial ribosomal protein bL12 family.</text>
</comment>
<reference key="1">
    <citation type="journal article" date="2009" name="BMC Genomics">
        <title>Complete genome sequence of the sugarcane nitrogen-fixing endophyte Gluconacetobacter diazotrophicus Pal5.</title>
        <authorList>
            <person name="Bertalan M."/>
            <person name="Albano R."/>
            <person name="de Padua V."/>
            <person name="Rouws L."/>
            <person name="Rojas C."/>
            <person name="Hemerly A."/>
            <person name="Teixeira K."/>
            <person name="Schwab S."/>
            <person name="Araujo J."/>
            <person name="Oliveira A."/>
            <person name="Franca L."/>
            <person name="Magalhaes V."/>
            <person name="Alqueres S."/>
            <person name="Cardoso A."/>
            <person name="Almeida W."/>
            <person name="Loureiro M.M."/>
            <person name="Nogueira E."/>
            <person name="Cidade D."/>
            <person name="Oliveira D."/>
            <person name="Simao T."/>
            <person name="Macedo J."/>
            <person name="Valadao A."/>
            <person name="Dreschsel M."/>
            <person name="Freitas F."/>
            <person name="Vidal M."/>
            <person name="Guedes H."/>
            <person name="Rodrigues E."/>
            <person name="Meneses C."/>
            <person name="Brioso P."/>
            <person name="Pozzer L."/>
            <person name="Figueiredo D."/>
            <person name="Montano H."/>
            <person name="Junior J."/>
            <person name="de Souza Filho G."/>
            <person name="Martin Quintana Flores V."/>
            <person name="Ferreira B."/>
            <person name="Branco A."/>
            <person name="Gonzalez P."/>
            <person name="Guillobel H."/>
            <person name="Lemos M."/>
            <person name="Seibel L."/>
            <person name="Macedo J."/>
            <person name="Alves-Ferreira M."/>
            <person name="Sachetto-Martins G."/>
            <person name="Coelho A."/>
            <person name="Santos E."/>
            <person name="Amaral G."/>
            <person name="Neves A."/>
            <person name="Pacheco A.B."/>
            <person name="Carvalho D."/>
            <person name="Lery L."/>
            <person name="Bisch P."/>
            <person name="Rossle S.C."/>
            <person name="Urmenyi T."/>
            <person name="Rael Pereira A."/>
            <person name="Silva R."/>
            <person name="Rondinelli E."/>
            <person name="von Kruger W."/>
            <person name="Martins O."/>
            <person name="Baldani J.I."/>
            <person name="Ferreira P.C."/>
        </authorList>
    </citation>
    <scope>NUCLEOTIDE SEQUENCE [LARGE SCALE GENOMIC DNA]</scope>
    <source>
        <strain>ATCC 49037 / DSM 5601 / CCUG 37298 / CIP 103539 / LMG 7603 / PAl5</strain>
    </source>
</reference>
<reference key="2">
    <citation type="journal article" date="2010" name="Stand. Genomic Sci.">
        <title>Two genome sequences of the same bacterial strain, Gluconacetobacter diazotrophicus PAl 5, suggest a new standard in genome sequence submission.</title>
        <authorList>
            <person name="Giongo A."/>
            <person name="Tyler H.L."/>
            <person name="Zipperer U.N."/>
            <person name="Triplett E.W."/>
        </authorList>
    </citation>
    <scope>NUCLEOTIDE SEQUENCE [LARGE SCALE GENOMIC DNA]</scope>
    <source>
        <strain>ATCC 49037 / DSM 5601 / CCUG 37298 / CIP 103539 / LMG 7603 / PAl5</strain>
    </source>
</reference>
<organism>
    <name type="scientific">Gluconacetobacter diazotrophicus (strain ATCC 49037 / DSM 5601 / CCUG 37298 / CIP 103539 / LMG 7603 / PAl5)</name>
    <dbReference type="NCBI Taxonomy" id="272568"/>
    <lineage>
        <taxon>Bacteria</taxon>
        <taxon>Pseudomonadati</taxon>
        <taxon>Pseudomonadota</taxon>
        <taxon>Alphaproteobacteria</taxon>
        <taxon>Acetobacterales</taxon>
        <taxon>Acetobacteraceae</taxon>
        <taxon>Gluconacetobacter</taxon>
    </lineage>
</organism>
<name>RL7_GLUDA</name>
<sequence>MADLTKLVDELSALTVLEAAELSKLLEEKWGVSAAAPVAVAAAPAAGAAAAPAEEQTEFTVVLAKAGDKKINVIKEIRGITGLGLKEAKDLVEGAPKTVKEGVNKDEAEKIKKLLEDNGASVEVK</sequence>